<gene>
    <name evidence="1" type="primary">thyA</name>
    <name type="ordered locus">BR1399</name>
    <name type="ordered locus">BS1330_I1393</name>
</gene>
<evidence type="ECO:0000255" key="1">
    <source>
        <dbReference type="HAMAP-Rule" id="MF_00008"/>
    </source>
</evidence>
<feature type="chain" id="PRO_0000140943" description="Thymidylate synthase">
    <location>
        <begin position="1"/>
        <end position="264"/>
    </location>
</feature>
<feature type="active site" description="Nucleophile" evidence="1">
    <location>
        <position position="146"/>
    </location>
</feature>
<feature type="binding site" description="in other chain" evidence="1">
    <location>
        <position position="21"/>
    </location>
    <ligand>
        <name>dUMP</name>
        <dbReference type="ChEBI" id="CHEBI:246422"/>
        <note>ligand shared between dimeric partners</note>
    </ligand>
</feature>
<feature type="binding site" evidence="1">
    <location>
        <position position="51"/>
    </location>
    <ligand>
        <name>(6R)-5,10-methylene-5,6,7,8-tetrahydrofolate</name>
        <dbReference type="ChEBI" id="CHEBI:15636"/>
    </ligand>
</feature>
<feature type="binding site" evidence="1">
    <location>
        <begin position="126"/>
        <end position="127"/>
    </location>
    <ligand>
        <name>dUMP</name>
        <dbReference type="ChEBI" id="CHEBI:246422"/>
        <note>ligand shared between dimeric partners</note>
    </ligand>
</feature>
<feature type="binding site" description="in other chain" evidence="1">
    <location>
        <begin position="166"/>
        <end position="169"/>
    </location>
    <ligand>
        <name>dUMP</name>
        <dbReference type="ChEBI" id="CHEBI:246422"/>
        <note>ligand shared between dimeric partners</note>
    </ligand>
</feature>
<feature type="binding site" evidence="1">
    <location>
        <position position="169"/>
    </location>
    <ligand>
        <name>(6R)-5,10-methylene-5,6,7,8-tetrahydrofolate</name>
        <dbReference type="ChEBI" id="CHEBI:15636"/>
    </ligand>
</feature>
<feature type="binding site" description="in other chain" evidence="1">
    <location>
        <position position="177"/>
    </location>
    <ligand>
        <name>dUMP</name>
        <dbReference type="ChEBI" id="CHEBI:246422"/>
        <note>ligand shared between dimeric partners</note>
    </ligand>
</feature>
<feature type="binding site" description="in other chain" evidence="1">
    <location>
        <begin position="207"/>
        <end position="209"/>
    </location>
    <ligand>
        <name>dUMP</name>
        <dbReference type="ChEBI" id="CHEBI:246422"/>
        <note>ligand shared between dimeric partners</note>
    </ligand>
</feature>
<feature type="binding site" evidence="1">
    <location>
        <position position="263"/>
    </location>
    <ligand>
        <name>(6R)-5,10-methylene-5,6,7,8-tetrahydrofolate</name>
        <dbReference type="ChEBI" id="CHEBI:15636"/>
    </ligand>
</feature>
<accession>P67043</accession>
<accession>G0KB82</accession>
<accession>Q8YI37</accession>
<protein>
    <recommendedName>
        <fullName evidence="1">Thymidylate synthase</fullName>
        <shortName evidence="1">TS</shortName>
        <shortName evidence="1">TSase</shortName>
        <ecNumber evidence="1">2.1.1.45</ecNumber>
    </recommendedName>
</protein>
<reference key="1">
    <citation type="journal article" date="2002" name="Proc. Natl. Acad. Sci. U.S.A.">
        <title>The Brucella suis genome reveals fundamental similarities between animal and plant pathogens and symbionts.</title>
        <authorList>
            <person name="Paulsen I.T."/>
            <person name="Seshadri R."/>
            <person name="Nelson K.E."/>
            <person name="Eisen J.A."/>
            <person name="Heidelberg J.F."/>
            <person name="Read T.D."/>
            <person name="Dodson R.J."/>
            <person name="Umayam L.A."/>
            <person name="Brinkac L.M."/>
            <person name="Beanan M.J."/>
            <person name="Daugherty S.C."/>
            <person name="DeBoy R.T."/>
            <person name="Durkin A.S."/>
            <person name="Kolonay J.F."/>
            <person name="Madupu R."/>
            <person name="Nelson W.C."/>
            <person name="Ayodeji B."/>
            <person name="Kraul M."/>
            <person name="Shetty J."/>
            <person name="Malek J.A."/>
            <person name="Van Aken S.E."/>
            <person name="Riedmuller S."/>
            <person name="Tettelin H."/>
            <person name="Gill S.R."/>
            <person name="White O."/>
            <person name="Salzberg S.L."/>
            <person name="Hoover D.L."/>
            <person name="Lindler L.E."/>
            <person name="Halling S.M."/>
            <person name="Boyle S.M."/>
            <person name="Fraser C.M."/>
        </authorList>
    </citation>
    <scope>NUCLEOTIDE SEQUENCE [LARGE SCALE GENOMIC DNA]</scope>
    <source>
        <strain>1330</strain>
    </source>
</reference>
<reference key="2">
    <citation type="journal article" date="2011" name="J. Bacteriol.">
        <title>Revised genome sequence of Brucella suis 1330.</title>
        <authorList>
            <person name="Tae H."/>
            <person name="Shallom S."/>
            <person name="Settlage R."/>
            <person name="Preston D."/>
            <person name="Adams L.G."/>
            <person name="Garner H.R."/>
        </authorList>
    </citation>
    <scope>NUCLEOTIDE SEQUENCE [LARGE SCALE GENOMIC DNA]</scope>
    <source>
        <strain>1330</strain>
    </source>
</reference>
<proteinExistence type="inferred from homology"/>
<organism>
    <name type="scientific">Brucella suis biovar 1 (strain 1330)</name>
    <dbReference type="NCBI Taxonomy" id="204722"/>
    <lineage>
        <taxon>Bacteria</taxon>
        <taxon>Pseudomonadati</taxon>
        <taxon>Pseudomonadota</taxon>
        <taxon>Alphaproteobacteria</taxon>
        <taxon>Hyphomicrobiales</taxon>
        <taxon>Brucellaceae</taxon>
        <taxon>Brucella/Ochrobactrum group</taxon>
        <taxon>Brucella</taxon>
    </lineage>
</organism>
<name>TYSY_BRUSU</name>
<keyword id="KW-0963">Cytoplasm</keyword>
<keyword id="KW-0489">Methyltransferase</keyword>
<keyword id="KW-0545">Nucleotide biosynthesis</keyword>
<keyword id="KW-0808">Transferase</keyword>
<sequence length="264" mass="30330">MRTYLDLLQHVLDHGVDRDDRTGTGTRSVFGYQMRFDLEEGFPVLTTKKLHLRSIIHELLWFLKGDTNIAYLKENGVTIWDEWADENGDLGPVYGYQWRSWPAPDGRHIDQIANLLKMLHTNPQSRRLIVSAWNPALVDEMALPPCHCLFQFYVANGRLSCQLYQRSADIFLGVPFNIASYALLTMMIAQVTGLKPGEFIHTLGDAHIYSNHFEQARLQLTRTPKKLPVMHINPDVKDLFAFRFEDFRLDGYEADPTIKAPIAV</sequence>
<comment type="function">
    <text evidence="1">Catalyzes the reductive methylation of 2'-deoxyuridine-5'-monophosphate (dUMP) to 2'-deoxythymidine-5'-monophosphate (dTMP) while utilizing 5,10-methylenetetrahydrofolate (mTHF) as the methyl donor and reductant in the reaction, yielding dihydrofolate (DHF) as a by-product. This enzymatic reaction provides an intracellular de novo source of dTMP, an essential precursor for DNA biosynthesis.</text>
</comment>
<comment type="catalytic activity">
    <reaction evidence="1">
        <text>dUMP + (6R)-5,10-methylene-5,6,7,8-tetrahydrofolate = 7,8-dihydrofolate + dTMP</text>
        <dbReference type="Rhea" id="RHEA:12104"/>
        <dbReference type="ChEBI" id="CHEBI:15636"/>
        <dbReference type="ChEBI" id="CHEBI:57451"/>
        <dbReference type="ChEBI" id="CHEBI:63528"/>
        <dbReference type="ChEBI" id="CHEBI:246422"/>
        <dbReference type="EC" id="2.1.1.45"/>
    </reaction>
</comment>
<comment type="pathway">
    <text evidence="1">Pyrimidine metabolism; dTTP biosynthesis.</text>
</comment>
<comment type="subunit">
    <text evidence="1">Homodimer.</text>
</comment>
<comment type="subcellular location">
    <subcellularLocation>
        <location evidence="1">Cytoplasm</location>
    </subcellularLocation>
</comment>
<comment type="similarity">
    <text evidence="1">Belongs to the thymidylate synthase family. Bacterial-type ThyA subfamily.</text>
</comment>
<dbReference type="EC" id="2.1.1.45" evidence="1"/>
<dbReference type="EMBL" id="AE014291">
    <property type="protein sequence ID" value="AAN30312.1"/>
    <property type="molecule type" value="Genomic_DNA"/>
</dbReference>
<dbReference type="EMBL" id="CP002997">
    <property type="protein sequence ID" value="AEM18728.1"/>
    <property type="molecule type" value="Genomic_DNA"/>
</dbReference>
<dbReference type="RefSeq" id="WP_002964508.1">
    <property type="nucleotide sequence ID" value="NZ_KN046804.1"/>
</dbReference>
<dbReference type="SMR" id="P67043"/>
<dbReference type="KEGG" id="bms:BR1399"/>
<dbReference type="KEGG" id="bsi:BS1330_I1393"/>
<dbReference type="PATRIC" id="fig|204722.21.peg.879"/>
<dbReference type="HOGENOM" id="CLU_021669_0_0_5"/>
<dbReference type="PhylomeDB" id="P67043"/>
<dbReference type="UniPathway" id="UPA00575"/>
<dbReference type="Proteomes" id="UP000007104">
    <property type="component" value="Chromosome I"/>
</dbReference>
<dbReference type="GO" id="GO:0005829">
    <property type="term" value="C:cytosol"/>
    <property type="evidence" value="ECO:0007669"/>
    <property type="project" value="TreeGrafter"/>
</dbReference>
<dbReference type="GO" id="GO:0004799">
    <property type="term" value="F:thymidylate synthase activity"/>
    <property type="evidence" value="ECO:0007669"/>
    <property type="project" value="UniProtKB-UniRule"/>
</dbReference>
<dbReference type="GO" id="GO:0006231">
    <property type="term" value="P:dTMP biosynthetic process"/>
    <property type="evidence" value="ECO:0007669"/>
    <property type="project" value="UniProtKB-UniRule"/>
</dbReference>
<dbReference type="GO" id="GO:0006235">
    <property type="term" value="P:dTTP biosynthetic process"/>
    <property type="evidence" value="ECO:0007669"/>
    <property type="project" value="UniProtKB-UniRule"/>
</dbReference>
<dbReference type="GO" id="GO:0032259">
    <property type="term" value="P:methylation"/>
    <property type="evidence" value="ECO:0007669"/>
    <property type="project" value="UniProtKB-KW"/>
</dbReference>
<dbReference type="CDD" id="cd00351">
    <property type="entry name" value="TS_Pyrimidine_HMase"/>
    <property type="match status" value="1"/>
</dbReference>
<dbReference type="FunFam" id="3.30.572.10:FF:000001">
    <property type="entry name" value="Thymidylate synthase"/>
    <property type="match status" value="1"/>
</dbReference>
<dbReference type="Gene3D" id="3.30.572.10">
    <property type="entry name" value="Thymidylate synthase/dCMP hydroxymethylase domain"/>
    <property type="match status" value="1"/>
</dbReference>
<dbReference type="HAMAP" id="MF_00008">
    <property type="entry name" value="Thymidy_synth_bact"/>
    <property type="match status" value="1"/>
</dbReference>
<dbReference type="InterPro" id="IPR045097">
    <property type="entry name" value="Thymidate_synth/dCMP_Mease"/>
</dbReference>
<dbReference type="InterPro" id="IPR023451">
    <property type="entry name" value="Thymidate_synth/dCMP_Mease_dom"/>
</dbReference>
<dbReference type="InterPro" id="IPR036926">
    <property type="entry name" value="Thymidate_synth/dCMP_Mease_sf"/>
</dbReference>
<dbReference type="InterPro" id="IPR000398">
    <property type="entry name" value="Thymidylate_synthase"/>
</dbReference>
<dbReference type="InterPro" id="IPR020940">
    <property type="entry name" value="Thymidylate_synthase_AS"/>
</dbReference>
<dbReference type="NCBIfam" id="NF002497">
    <property type="entry name" value="PRK01827.1-3"/>
    <property type="match status" value="1"/>
</dbReference>
<dbReference type="NCBIfam" id="NF002499">
    <property type="entry name" value="PRK01827.1-5"/>
    <property type="match status" value="1"/>
</dbReference>
<dbReference type="NCBIfam" id="TIGR03284">
    <property type="entry name" value="thym_sym"/>
    <property type="match status" value="2"/>
</dbReference>
<dbReference type="PANTHER" id="PTHR11548:SF9">
    <property type="entry name" value="THYMIDYLATE SYNTHASE"/>
    <property type="match status" value="1"/>
</dbReference>
<dbReference type="PANTHER" id="PTHR11548">
    <property type="entry name" value="THYMIDYLATE SYNTHASE 1"/>
    <property type="match status" value="1"/>
</dbReference>
<dbReference type="Pfam" id="PF00303">
    <property type="entry name" value="Thymidylat_synt"/>
    <property type="match status" value="1"/>
</dbReference>
<dbReference type="PRINTS" id="PR00108">
    <property type="entry name" value="THYMDSNTHASE"/>
</dbReference>
<dbReference type="SUPFAM" id="SSF55831">
    <property type="entry name" value="Thymidylate synthase/dCMP hydroxymethylase"/>
    <property type="match status" value="1"/>
</dbReference>
<dbReference type="PROSITE" id="PS00091">
    <property type="entry name" value="THYMIDYLATE_SYNTHASE"/>
    <property type="match status" value="1"/>
</dbReference>